<reference key="1">
    <citation type="submission" date="2006-03" db="EMBL/GenBank/DDBJ databases">
        <title>Complete sequence of chromosome of Psychrobacter cryohalolentis K5.</title>
        <authorList>
            <consortium name="US DOE Joint Genome Institute"/>
            <person name="Copeland A."/>
            <person name="Lucas S."/>
            <person name="Lapidus A."/>
            <person name="Barry K."/>
            <person name="Detter J.C."/>
            <person name="Glavina T."/>
            <person name="Hammon N."/>
            <person name="Israni S."/>
            <person name="Dalin E."/>
            <person name="Tice H."/>
            <person name="Pitluck S."/>
            <person name="Brettin T."/>
            <person name="Bruce D."/>
            <person name="Han C."/>
            <person name="Tapia R."/>
            <person name="Sims D.R."/>
            <person name="Gilna P."/>
            <person name="Schmutz J."/>
            <person name="Larimer F."/>
            <person name="Land M."/>
            <person name="Hauser L."/>
            <person name="Kyrpides N."/>
            <person name="Kim E."/>
            <person name="Richardson P."/>
        </authorList>
    </citation>
    <scope>NUCLEOTIDE SEQUENCE [LARGE SCALE GENOMIC DNA]</scope>
    <source>
        <strain>ATCC BAA-1226 / DSM 17306 / VKM B-2378 / K5</strain>
    </source>
</reference>
<keyword id="KW-0560">Oxidoreductase</keyword>
<gene>
    <name evidence="1" type="primary">msrA</name>
    <name type="ordered locus">Pcryo_2243</name>
</gene>
<proteinExistence type="inferred from homology"/>
<accession>Q1Q8I3</accession>
<sequence length="173" mass="19278">MQTIILGGGCFWCTESVFLSVKGVQSVISGYMGGDAVSANYEAVCGGNTGHVEVIKVEFDESIVPLEVILDVFFATHDPTTMDRQGNDVGSQYRSVVFYTDETQKPTIDRTINKLRDMGINVVTEVHPAVEFYQAEDTHQDFFNRNPGQAYCNFAIPPKLAKLRKEFSQYMVS</sequence>
<feature type="chain" id="PRO_1000068355" description="Peptide methionine sulfoxide reductase MsrA">
    <location>
        <begin position="1"/>
        <end position="173"/>
    </location>
</feature>
<feature type="active site" evidence="1">
    <location>
        <position position="10"/>
    </location>
</feature>
<organism>
    <name type="scientific">Psychrobacter cryohalolentis (strain ATCC BAA-1226 / DSM 17306 / VKM B-2378 / K5)</name>
    <dbReference type="NCBI Taxonomy" id="335284"/>
    <lineage>
        <taxon>Bacteria</taxon>
        <taxon>Pseudomonadati</taxon>
        <taxon>Pseudomonadota</taxon>
        <taxon>Gammaproteobacteria</taxon>
        <taxon>Moraxellales</taxon>
        <taxon>Moraxellaceae</taxon>
        <taxon>Psychrobacter</taxon>
    </lineage>
</organism>
<protein>
    <recommendedName>
        <fullName evidence="1">Peptide methionine sulfoxide reductase MsrA</fullName>
        <shortName evidence="1">Protein-methionine-S-oxide reductase</shortName>
        <ecNumber evidence="1">1.8.4.11</ecNumber>
    </recommendedName>
    <alternativeName>
        <fullName evidence="1">Peptide-methionine (S)-S-oxide reductase</fullName>
        <shortName evidence="1">Peptide Met(O) reductase</shortName>
    </alternativeName>
</protein>
<comment type="function">
    <text evidence="1">Has an important function as a repair enzyme for proteins that have been inactivated by oxidation. Catalyzes the reversible oxidation-reduction of methionine sulfoxide in proteins to methionine.</text>
</comment>
<comment type="catalytic activity">
    <reaction evidence="1">
        <text>L-methionyl-[protein] + [thioredoxin]-disulfide + H2O = L-methionyl-(S)-S-oxide-[protein] + [thioredoxin]-dithiol</text>
        <dbReference type="Rhea" id="RHEA:14217"/>
        <dbReference type="Rhea" id="RHEA-COMP:10698"/>
        <dbReference type="Rhea" id="RHEA-COMP:10700"/>
        <dbReference type="Rhea" id="RHEA-COMP:12313"/>
        <dbReference type="Rhea" id="RHEA-COMP:12315"/>
        <dbReference type="ChEBI" id="CHEBI:15377"/>
        <dbReference type="ChEBI" id="CHEBI:16044"/>
        <dbReference type="ChEBI" id="CHEBI:29950"/>
        <dbReference type="ChEBI" id="CHEBI:44120"/>
        <dbReference type="ChEBI" id="CHEBI:50058"/>
        <dbReference type="EC" id="1.8.4.11"/>
    </reaction>
</comment>
<comment type="catalytic activity">
    <reaction evidence="1">
        <text>[thioredoxin]-disulfide + L-methionine + H2O = L-methionine (S)-S-oxide + [thioredoxin]-dithiol</text>
        <dbReference type="Rhea" id="RHEA:19993"/>
        <dbReference type="Rhea" id="RHEA-COMP:10698"/>
        <dbReference type="Rhea" id="RHEA-COMP:10700"/>
        <dbReference type="ChEBI" id="CHEBI:15377"/>
        <dbReference type="ChEBI" id="CHEBI:29950"/>
        <dbReference type="ChEBI" id="CHEBI:50058"/>
        <dbReference type="ChEBI" id="CHEBI:57844"/>
        <dbReference type="ChEBI" id="CHEBI:58772"/>
        <dbReference type="EC" id="1.8.4.11"/>
    </reaction>
</comment>
<comment type="similarity">
    <text evidence="1">Belongs to the MsrA Met sulfoxide reductase family.</text>
</comment>
<name>MSRA_PSYCK</name>
<dbReference type="EC" id="1.8.4.11" evidence="1"/>
<dbReference type="EMBL" id="CP000323">
    <property type="protein sequence ID" value="ABE76020.1"/>
    <property type="molecule type" value="Genomic_DNA"/>
</dbReference>
<dbReference type="RefSeq" id="WP_011514553.1">
    <property type="nucleotide sequence ID" value="NC_007969.1"/>
</dbReference>
<dbReference type="SMR" id="Q1Q8I3"/>
<dbReference type="STRING" id="335284.Pcryo_2243"/>
<dbReference type="KEGG" id="pcr:Pcryo_2243"/>
<dbReference type="eggNOG" id="COG0225">
    <property type="taxonomic scope" value="Bacteria"/>
</dbReference>
<dbReference type="HOGENOM" id="CLU_031040_10_0_6"/>
<dbReference type="Proteomes" id="UP000002425">
    <property type="component" value="Chromosome"/>
</dbReference>
<dbReference type="GO" id="GO:0033744">
    <property type="term" value="F:L-methionine:thioredoxin-disulfide S-oxidoreductase activity"/>
    <property type="evidence" value="ECO:0007669"/>
    <property type="project" value="RHEA"/>
</dbReference>
<dbReference type="GO" id="GO:0008113">
    <property type="term" value="F:peptide-methionine (S)-S-oxide reductase activity"/>
    <property type="evidence" value="ECO:0007669"/>
    <property type="project" value="UniProtKB-UniRule"/>
</dbReference>
<dbReference type="GO" id="GO:0036211">
    <property type="term" value="P:protein modification process"/>
    <property type="evidence" value="ECO:0007669"/>
    <property type="project" value="UniProtKB-UniRule"/>
</dbReference>
<dbReference type="Gene3D" id="3.30.1060.10">
    <property type="entry name" value="Peptide methionine sulphoxide reductase MsrA"/>
    <property type="match status" value="1"/>
</dbReference>
<dbReference type="HAMAP" id="MF_01401">
    <property type="entry name" value="MsrA"/>
    <property type="match status" value="1"/>
</dbReference>
<dbReference type="InterPro" id="IPR002569">
    <property type="entry name" value="Met_Sox_Rdtase_MsrA_dom"/>
</dbReference>
<dbReference type="InterPro" id="IPR036509">
    <property type="entry name" value="Met_Sox_Rdtase_MsrA_sf"/>
</dbReference>
<dbReference type="NCBIfam" id="TIGR00401">
    <property type="entry name" value="msrA"/>
    <property type="match status" value="1"/>
</dbReference>
<dbReference type="PANTHER" id="PTHR43774">
    <property type="entry name" value="PEPTIDE METHIONINE SULFOXIDE REDUCTASE"/>
    <property type="match status" value="1"/>
</dbReference>
<dbReference type="PANTHER" id="PTHR43774:SF1">
    <property type="entry name" value="PEPTIDE METHIONINE SULFOXIDE REDUCTASE MSRA 2"/>
    <property type="match status" value="1"/>
</dbReference>
<dbReference type="Pfam" id="PF01625">
    <property type="entry name" value="PMSR"/>
    <property type="match status" value="1"/>
</dbReference>
<dbReference type="SUPFAM" id="SSF55068">
    <property type="entry name" value="Peptide methionine sulfoxide reductase"/>
    <property type="match status" value="1"/>
</dbReference>
<evidence type="ECO:0000255" key="1">
    <source>
        <dbReference type="HAMAP-Rule" id="MF_01401"/>
    </source>
</evidence>